<comment type="function">
    <text evidence="1">Catalyzes the transfer of a dimethylallyl group onto the adenine at position 37 in tRNAs that read codons beginning with uridine, leading to the formation of N6-(dimethylallyl)adenosine (i(6)A).</text>
</comment>
<comment type="catalytic activity">
    <reaction evidence="1">
        <text>adenosine(37) in tRNA + dimethylallyl diphosphate = N(6)-dimethylallyladenosine(37) in tRNA + diphosphate</text>
        <dbReference type="Rhea" id="RHEA:26482"/>
        <dbReference type="Rhea" id="RHEA-COMP:10162"/>
        <dbReference type="Rhea" id="RHEA-COMP:10375"/>
        <dbReference type="ChEBI" id="CHEBI:33019"/>
        <dbReference type="ChEBI" id="CHEBI:57623"/>
        <dbReference type="ChEBI" id="CHEBI:74411"/>
        <dbReference type="ChEBI" id="CHEBI:74415"/>
        <dbReference type="EC" id="2.5.1.75"/>
    </reaction>
</comment>
<comment type="cofactor">
    <cofactor evidence="1">
        <name>Mg(2+)</name>
        <dbReference type="ChEBI" id="CHEBI:18420"/>
    </cofactor>
</comment>
<comment type="subunit">
    <text evidence="1">Monomer.</text>
</comment>
<comment type="similarity">
    <text evidence="1">Belongs to the IPP transferase family.</text>
</comment>
<evidence type="ECO:0000255" key="1">
    <source>
        <dbReference type="HAMAP-Rule" id="MF_00185"/>
    </source>
</evidence>
<protein>
    <recommendedName>
        <fullName evidence="1">tRNA dimethylallyltransferase</fullName>
        <ecNumber evidence="1">2.5.1.75</ecNumber>
    </recommendedName>
    <alternativeName>
        <fullName evidence="1">Dimethylallyl diphosphate:tRNA dimethylallyltransferase</fullName>
        <shortName evidence="1">DMAPP:tRNA dimethylallyltransferase</shortName>
        <shortName evidence="1">DMATase</shortName>
    </alternativeName>
    <alternativeName>
        <fullName evidence="1">Isopentenyl-diphosphate:tRNA isopentenyltransferase</fullName>
        <shortName evidence="1">IPP transferase</shortName>
        <shortName evidence="1">IPPT</shortName>
        <shortName evidence="1">IPTase</shortName>
    </alternativeName>
</protein>
<proteinExistence type="inferred from homology"/>
<keyword id="KW-0067">ATP-binding</keyword>
<keyword id="KW-0460">Magnesium</keyword>
<keyword id="KW-0547">Nucleotide-binding</keyword>
<keyword id="KW-0808">Transferase</keyword>
<keyword id="KW-0819">tRNA processing</keyword>
<sequence>MKIAIVGGPTAVGKTDIMIEVCEEIGAEIISMDSRQIYRYMDIGTAKPTPEQRKRVPHHMIDILDPDEYYNAFLYRKDSLKAVEAILKRGKIPVYVGGTGLYADALVRGIFEGVPADENIRKELRELERREPGILRKMLEEFDPEAATRIHPNDLKRTIRALEVYMKTGRRISELQKETKGDDRFFIIVLTRERYDLYDRINRRVDRMIEMGLVDEVKRLLSMGYSKDLNSMKTIGYKEVIEYLEGKYDFEKMVHLIKRNTRHFARRQIIWFKRYENAIWYNLTFVSKEELKKTLKELIVKNFSV</sequence>
<dbReference type="EC" id="2.5.1.75" evidence="1"/>
<dbReference type="EMBL" id="CP000969">
    <property type="protein sequence ID" value="ACB08768.1"/>
    <property type="molecule type" value="Genomic_DNA"/>
</dbReference>
<dbReference type="RefSeq" id="WP_012310529.1">
    <property type="nucleotide sequence ID" value="NC_010483.1"/>
</dbReference>
<dbReference type="SMR" id="B1L8X0"/>
<dbReference type="KEGG" id="trq:TRQ2_0412"/>
<dbReference type="HOGENOM" id="CLU_032616_0_1_0"/>
<dbReference type="Proteomes" id="UP000001687">
    <property type="component" value="Chromosome"/>
</dbReference>
<dbReference type="GO" id="GO:0005524">
    <property type="term" value="F:ATP binding"/>
    <property type="evidence" value="ECO:0007669"/>
    <property type="project" value="UniProtKB-UniRule"/>
</dbReference>
<dbReference type="GO" id="GO:0052381">
    <property type="term" value="F:tRNA dimethylallyltransferase activity"/>
    <property type="evidence" value="ECO:0007669"/>
    <property type="project" value="UniProtKB-UniRule"/>
</dbReference>
<dbReference type="GO" id="GO:0006400">
    <property type="term" value="P:tRNA modification"/>
    <property type="evidence" value="ECO:0007669"/>
    <property type="project" value="TreeGrafter"/>
</dbReference>
<dbReference type="FunFam" id="1.10.20.140:FF:000001">
    <property type="entry name" value="tRNA dimethylallyltransferase"/>
    <property type="match status" value="1"/>
</dbReference>
<dbReference type="Gene3D" id="1.10.20.140">
    <property type="match status" value="1"/>
</dbReference>
<dbReference type="Gene3D" id="3.40.50.300">
    <property type="entry name" value="P-loop containing nucleotide triphosphate hydrolases"/>
    <property type="match status" value="1"/>
</dbReference>
<dbReference type="HAMAP" id="MF_00185">
    <property type="entry name" value="IPP_trans"/>
    <property type="match status" value="1"/>
</dbReference>
<dbReference type="InterPro" id="IPR039657">
    <property type="entry name" value="Dimethylallyltransferase"/>
</dbReference>
<dbReference type="InterPro" id="IPR018022">
    <property type="entry name" value="IPT"/>
</dbReference>
<dbReference type="InterPro" id="IPR027417">
    <property type="entry name" value="P-loop_NTPase"/>
</dbReference>
<dbReference type="NCBIfam" id="TIGR00174">
    <property type="entry name" value="miaA"/>
    <property type="match status" value="1"/>
</dbReference>
<dbReference type="PANTHER" id="PTHR11088">
    <property type="entry name" value="TRNA DIMETHYLALLYLTRANSFERASE"/>
    <property type="match status" value="1"/>
</dbReference>
<dbReference type="PANTHER" id="PTHR11088:SF60">
    <property type="entry name" value="TRNA DIMETHYLALLYLTRANSFERASE"/>
    <property type="match status" value="1"/>
</dbReference>
<dbReference type="Pfam" id="PF01715">
    <property type="entry name" value="IPPT"/>
    <property type="match status" value="1"/>
</dbReference>
<dbReference type="SUPFAM" id="SSF52540">
    <property type="entry name" value="P-loop containing nucleoside triphosphate hydrolases"/>
    <property type="match status" value="1"/>
</dbReference>
<reference key="1">
    <citation type="journal article" date="2011" name="J. Bacteriol.">
        <title>Genome sequence of Thermotoga sp. strain RQ2, a hyperthermophilic bacterium isolated from a geothermally heated region of the seafloor near Ribeira Quente, the Azores.</title>
        <authorList>
            <person name="Swithers K.S."/>
            <person name="DiPippo J.L."/>
            <person name="Bruce D.C."/>
            <person name="Detter C."/>
            <person name="Tapia R."/>
            <person name="Han S."/>
            <person name="Saunders E."/>
            <person name="Goodwin L.A."/>
            <person name="Han J."/>
            <person name="Woyke T."/>
            <person name="Pitluck S."/>
            <person name="Pennacchio L."/>
            <person name="Nolan M."/>
            <person name="Mikhailova N."/>
            <person name="Lykidis A."/>
            <person name="Land M.L."/>
            <person name="Brettin T."/>
            <person name="Stetter K.O."/>
            <person name="Nelson K.E."/>
            <person name="Gogarten J.P."/>
            <person name="Noll K.M."/>
        </authorList>
    </citation>
    <scope>NUCLEOTIDE SEQUENCE [LARGE SCALE GENOMIC DNA]</scope>
    <source>
        <strain>RQ2</strain>
    </source>
</reference>
<organism>
    <name type="scientific">Thermotoga sp. (strain RQ2)</name>
    <dbReference type="NCBI Taxonomy" id="126740"/>
    <lineage>
        <taxon>Bacteria</taxon>
        <taxon>Thermotogati</taxon>
        <taxon>Thermotogota</taxon>
        <taxon>Thermotogae</taxon>
        <taxon>Thermotogales</taxon>
        <taxon>Thermotogaceae</taxon>
        <taxon>Thermotoga</taxon>
    </lineage>
</organism>
<accession>B1L8X0</accession>
<name>MIAA_THESQ</name>
<feature type="chain" id="PRO_1000098697" description="tRNA dimethylallyltransferase">
    <location>
        <begin position="1"/>
        <end position="305"/>
    </location>
</feature>
<feature type="region of interest" description="Interaction with substrate tRNA" evidence="1">
    <location>
        <begin position="33"/>
        <end position="36"/>
    </location>
</feature>
<feature type="binding site" evidence="1">
    <location>
        <begin position="8"/>
        <end position="15"/>
    </location>
    <ligand>
        <name>ATP</name>
        <dbReference type="ChEBI" id="CHEBI:30616"/>
    </ligand>
</feature>
<feature type="binding site" evidence="1">
    <location>
        <begin position="10"/>
        <end position="15"/>
    </location>
    <ligand>
        <name>substrate</name>
    </ligand>
</feature>
<feature type="site" description="Interaction with substrate tRNA" evidence="1">
    <location>
        <position position="99"/>
    </location>
</feature>
<feature type="site" description="Interaction with substrate tRNA" evidence="1">
    <location>
        <position position="121"/>
    </location>
</feature>
<gene>
    <name evidence="1" type="primary">miaA</name>
    <name type="ordered locus">TRQ2_0412</name>
</gene>